<dbReference type="EC" id="1.1.1.86" evidence="1"/>
<dbReference type="EMBL" id="CP001150">
    <property type="protein sequence ID" value="ACM00035.1"/>
    <property type="molecule type" value="Genomic_DNA"/>
</dbReference>
<dbReference type="RefSeq" id="WP_002722768.1">
    <property type="nucleotide sequence ID" value="NC_011963.1"/>
</dbReference>
<dbReference type="SMR" id="B9KM37"/>
<dbReference type="GeneID" id="67445655"/>
<dbReference type="KEGG" id="rsk:RSKD131_0175"/>
<dbReference type="HOGENOM" id="CLU_033821_0_1_5"/>
<dbReference type="UniPathway" id="UPA00047">
    <property type="reaction ID" value="UER00056"/>
</dbReference>
<dbReference type="UniPathway" id="UPA00049">
    <property type="reaction ID" value="UER00060"/>
</dbReference>
<dbReference type="GO" id="GO:0005829">
    <property type="term" value="C:cytosol"/>
    <property type="evidence" value="ECO:0007669"/>
    <property type="project" value="TreeGrafter"/>
</dbReference>
<dbReference type="GO" id="GO:0004455">
    <property type="term" value="F:ketol-acid reductoisomerase activity"/>
    <property type="evidence" value="ECO:0007669"/>
    <property type="project" value="UniProtKB-UniRule"/>
</dbReference>
<dbReference type="GO" id="GO:0000287">
    <property type="term" value="F:magnesium ion binding"/>
    <property type="evidence" value="ECO:0007669"/>
    <property type="project" value="UniProtKB-UniRule"/>
</dbReference>
<dbReference type="GO" id="GO:0050661">
    <property type="term" value="F:NADP binding"/>
    <property type="evidence" value="ECO:0007669"/>
    <property type="project" value="InterPro"/>
</dbReference>
<dbReference type="GO" id="GO:0009097">
    <property type="term" value="P:isoleucine biosynthetic process"/>
    <property type="evidence" value="ECO:0007669"/>
    <property type="project" value="UniProtKB-UniRule"/>
</dbReference>
<dbReference type="GO" id="GO:0009099">
    <property type="term" value="P:L-valine biosynthetic process"/>
    <property type="evidence" value="ECO:0007669"/>
    <property type="project" value="UniProtKB-UniRule"/>
</dbReference>
<dbReference type="FunFam" id="3.40.50.720:FF:000023">
    <property type="entry name" value="Ketol-acid reductoisomerase (NADP(+))"/>
    <property type="match status" value="1"/>
</dbReference>
<dbReference type="Gene3D" id="6.10.240.10">
    <property type="match status" value="1"/>
</dbReference>
<dbReference type="Gene3D" id="3.40.50.720">
    <property type="entry name" value="NAD(P)-binding Rossmann-like Domain"/>
    <property type="match status" value="1"/>
</dbReference>
<dbReference type="HAMAP" id="MF_00435">
    <property type="entry name" value="IlvC"/>
    <property type="match status" value="1"/>
</dbReference>
<dbReference type="InterPro" id="IPR008927">
    <property type="entry name" value="6-PGluconate_DH-like_C_sf"/>
</dbReference>
<dbReference type="InterPro" id="IPR013023">
    <property type="entry name" value="KARI"/>
</dbReference>
<dbReference type="InterPro" id="IPR000506">
    <property type="entry name" value="KARI_C"/>
</dbReference>
<dbReference type="InterPro" id="IPR013116">
    <property type="entry name" value="KARI_N"/>
</dbReference>
<dbReference type="InterPro" id="IPR014359">
    <property type="entry name" value="KARI_prok"/>
</dbReference>
<dbReference type="InterPro" id="IPR036291">
    <property type="entry name" value="NAD(P)-bd_dom_sf"/>
</dbReference>
<dbReference type="NCBIfam" id="TIGR00465">
    <property type="entry name" value="ilvC"/>
    <property type="match status" value="1"/>
</dbReference>
<dbReference type="NCBIfam" id="NF004017">
    <property type="entry name" value="PRK05479.1"/>
    <property type="match status" value="1"/>
</dbReference>
<dbReference type="NCBIfam" id="NF009940">
    <property type="entry name" value="PRK13403.1"/>
    <property type="match status" value="1"/>
</dbReference>
<dbReference type="PANTHER" id="PTHR21371">
    <property type="entry name" value="KETOL-ACID REDUCTOISOMERASE, MITOCHONDRIAL"/>
    <property type="match status" value="1"/>
</dbReference>
<dbReference type="PANTHER" id="PTHR21371:SF1">
    <property type="entry name" value="KETOL-ACID REDUCTOISOMERASE, MITOCHONDRIAL"/>
    <property type="match status" value="1"/>
</dbReference>
<dbReference type="Pfam" id="PF01450">
    <property type="entry name" value="KARI_C"/>
    <property type="match status" value="1"/>
</dbReference>
<dbReference type="Pfam" id="PF07991">
    <property type="entry name" value="KARI_N"/>
    <property type="match status" value="1"/>
</dbReference>
<dbReference type="PIRSF" id="PIRSF000116">
    <property type="entry name" value="IlvC_gammaproteo"/>
    <property type="match status" value="1"/>
</dbReference>
<dbReference type="SUPFAM" id="SSF48179">
    <property type="entry name" value="6-phosphogluconate dehydrogenase C-terminal domain-like"/>
    <property type="match status" value="1"/>
</dbReference>
<dbReference type="SUPFAM" id="SSF51735">
    <property type="entry name" value="NAD(P)-binding Rossmann-fold domains"/>
    <property type="match status" value="1"/>
</dbReference>
<dbReference type="PROSITE" id="PS51851">
    <property type="entry name" value="KARI_C"/>
    <property type="match status" value="1"/>
</dbReference>
<dbReference type="PROSITE" id="PS51850">
    <property type="entry name" value="KARI_N"/>
    <property type="match status" value="1"/>
</dbReference>
<evidence type="ECO:0000255" key="1">
    <source>
        <dbReference type="HAMAP-Rule" id="MF_00435"/>
    </source>
</evidence>
<evidence type="ECO:0000255" key="2">
    <source>
        <dbReference type="PROSITE-ProRule" id="PRU01197"/>
    </source>
</evidence>
<evidence type="ECO:0000255" key="3">
    <source>
        <dbReference type="PROSITE-ProRule" id="PRU01198"/>
    </source>
</evidence>
<feature type="chain" id="PRO_1000190981" description="Ketol-acid reductoisomerase (NADP(+))">
    <location>
        <begin position="1"/>
        <end position="340"/>
    </location>
</feature>
<feature type="domain" description="KARI N-terminal Rossmann" evidence="2">
    <location>
        <begin position="1"/>
        <end position="182"/>
    </location>
</feature>
<feature type="domain" description="KARI C-terminal knotted" evidence="3">
    <location>
        <begin position="183"/>
        <end position="329"/>
    </location>
</feature>
<feature type="active site" evidence="1">
    <location>
        <position position="108"/>
    </location>
</feature>
<feature type="binding site" evidence="1">
    <location>
        <begin position="24"/>
        <end position="27"/>
    </location>
    <ligand>
        <name>NADP(+)</name>
        <dbReference type="ChEBI" id="CHEBI:58349"/>
    </ligand>
</feature>
<feature type="binding site" evidence="1">
    <location>
        <position position="48"/>
    </location>
    <ligand>
        <name>NADP(+)</name>
        <dbReference type="ChEBI" id="CHEBI:58349"/>
    </ligand>
</feature>
<feature type="binding site" evidence="1">
    <location>
        <position position="51"/>
    </location>
    <ligand>
        <name>NADP(+)</name>
        <dbReference type="ChEBI" id="CHEBI:58349"/>
    </ligand>
</feature>
<feature type="binding site" evidence="1">
    <location>
        <position position="53"/>
    </location>
    <ligand>
        <name>NADP(+)</name>
        <dbReference type="ChEBI" id="CHEBI:58349"/>
    </ligand>
</feature>
<feature type="binding site" evidence="1">
    <location>
        <begin position="83"/>
        <end position="86"/>
    </location>
    <ligand>
        <name>NADP(+)</name>
        <dbReference type="ChEBI" id="CHEBI:58349"/>
    </ligand>
</feature>
<feature type="binding site" evidence="1">
    <location>
        <position position="134"/>
    </location>
    <ligand>
        <name>NADP(+)</name>
        <dbReference type="ChEBI" id="CHEBI:58349"/>
    </ligand>
</feature>
<feature type="binding site" evidence="1">
    <location>
        <position position="191"/>
    </location>
    <ligand>
        <name>Mg(2+)</name>
        <dbReference type="ChEBI" id="CHEBI:18420"/>
        <label>1</label>
    </ligand>
</feature>
<feature type="binding site" evidence="1">
    <location>
        <position position="191"/>
    </location>
    <ligand>
        <name>Mg(2+)</name>
        <dbReference type="ChEBI" id="CHEBI:18420"/>
        <label>2</label>
    </ligand>
</feature>
<feature type="binding site" evidence="1">
    <location>
        <position position="195"/>
    </location>
    <ligand>
        <name>Mg(2+)</name>
        <dbReference type="ChEBI" id="CHEBI:18420"/>
        <label>1</label>
    </ligand>
</feature>
<feature type="binding site" evidence="1">
    <location>
        <position position="227"/>
    </location>
    <ligand>
        <name>Mg(2+)</name>
        <dbReference type="ChEBI" id="CHEBI:18420"/>
        <label>2</label>
    </ligand>
</feature>
<feature type="binding site" evidence="1">
    <location>
        <position position="231"/>
    </location>
    <ligand>
        <name>Mg(2+)</name>
        <dbReference type="ChEBI" id="CHEBI:18420"/>
        <label>2</label>
    </ligand>
</feature>
<feature type="binding site" evidence="1">
    <location>
        <position position="252"/>
    </location>
    <ligand>
        <name>substrate</name>
    </ligand>
</feature>
<name>ILVC_CERSK</name>
<organism>
    <name type="scientific">Cereibacter sphaeroides (strain KD131 / KCTC 12085)</name>
    <name type="common">Rhodobacter sphaeroides</name>
    <dbReference type="NCBI Taxonomy" id="557760"/>
    <lineage>
        <taxon>Bacteria</taxon>
        <taxon>Pseudomonadati</taxon>
        <taxon>Pseudomonadota</taxon>
        <taxon>Alphaproteobacteria</taxon>
        <taxon>Rhodobacterales</taxon>
        <taxon>Paracoccaceae</taxon>
        <taxon>Cereibacter</taxon>
    </lineage>
</organism>
<reference key="1">
    <citation type="journal article" date="2009" name="J. Bacteriol.">
        <title>Complete genome sequence of Rhodobacter sphaeroides KD131.</title>
        <authorList>
            <person name="Lim S.-K."/>
            <person name="Kim S.J."/>
            <person name="Cha S.H."/>
            <person name="Oh Y.-K."/>
            <person name="Rhee H.-J."/>
            <person name="Kim M.-S."/>
            <person name="Lee J.K."/>
        </authorList>
    </citation>
    <scope>NUCLEOTIDE SEQUENCE [LARGE SCALE GENOMIC DNA]</scope>
    <source>
        <strain>KD131 / KCTC 12085</strain>
    </source>
</reference>
<comment type="function">
    <text evidence="1">Involved in the biosynthesis of branched-chain amino acids (BCAA). Catalyzes an alkyl-migration followed by a ketol-acid reduction of (S)-2-acetolactate (S2AL) to yield (R)-2,3-dihydroxy-isovalerate. In the isomerase reaction, S2AL is rearranged via a Mg-dependent methyl migration to produce 3-hydroxy-3-methyl-2-ketobutyrate (HMKB). In the reductase reaction, this 2-ketoacid undergoes a metal-dependent reduction by NADPH to yield (R)-2,3-dihydroxy-isovalerate.</text>
</comment>
<comment type="catalytic activity">
    <reaction evidence="1">
        <text>(2R)-2,3-dihydroxy-3-methylbutanoate + NADP(+) = (2S)-2-acetolactate + NADPH + H(+)</text>
        <dbReference type="Rhea" id="RHEA:22068"/>
        <dbReference type="ChEBI" id="CHEBI:15378"/>
        <dbReference type="ChEBI" id="CHEBI:49072"/>
        <dbReference type="ChEBI" id="CHEBI:57783"/>
        <dbReference type="ChEBI" id="CHEBI:58349"/>
        <dbReference type="ChEBI" id="CHEBI:58476"/>
        <dbReference type="EC" id="1.1.1.86"/>
    </reaction>
</comment>
<comment type="catalytic activity">
    <reaction evidence="1">
        <text>(2R,3R)-2,3-dihydroxy-3-methylpentanoate + NADP(+) = (S)-2-ethyl-2-hydroxy-3-oxobutanoate + NADPH + H(+)</text>
        <dbReference type="Rhea" id="RHEA:13493"/>
        <dbReference type="ChEBI" id="CHEBI:15378"/>
        <dbReference type="ChEBI" id="CHEBI:49256"/>
        <dbReference type="ChEBI" id="CHEBI:49258"/>
        <dbReference type="ChEBI" id="CHEBI:57783"/>
        <dbReference type="ChEBI" id="CHEBI:58349"/>
        <dbReference type="EC" id="1.1.1.86"/>
    </reaction>
</comment>
<comment type="cofactor">
    <cofactor evidence="1">
        <name>Mg(2+)</name>
        <dbReference type="ChEBI" id="CHEBI:18420"/>
    </cofactor>
    <text evidence="1">Binds 2 magnesium ions per subunit.</text>
</comment>
<comment type="pathway">
    <text evidence="1">Amino-acid biosynthesis; L-isoleucine biosynthesis; L-isoleucine from 2-oxobutanoate: step 2/4.</text>
</comment>
<comment type="pathway">
    <text evidence="1">Amino-acid biosynthesis; L-valine biosynthesis; L-valine from pyruvate: step 2/4.</text>
</comment>
<comment type="similarity">
    <text evidence="1">Belongs to the ketol-acid reductoisomerase family.</text>
</comment>
<sequence>MRVYYDRDCDINLIKDKKVAILGYGSQGHAHALNLRDSGAKNVVVALREGSPSAKKAEAEGLKVMGIAEAAAWCDLIMFTMPDELQAETYKKYVHDNLREGSAIAFAHGLNVHFGLIEPKPGVDVIMMAPKGPGHTVRGEYVKGGGVPCLVAVHNDATGKAMEIGLSYCSAIGGGRSGIIETNFRQECETDLFGEQAVLCGGLVELIRMGFETLVEAGYEPEMAYFECLHEVKLIVDLIYEGGIANMNYSISNTAEYGEYVSGPRILPYEETKARMKAVLTDIQTGKFVRDFMQENAVGQPFFKATRRINDEHQIEQVGEKLRGMMPWISKGKMVDRARN</sequence>
<keyword id="KW-0028">Amino-acid biosynthesis</keyword>
<keyword id="KW-0100">Branched-chain amino acid biosynthesis</keyword>
<keyword id="KW-0460">Magnesium</keyword>
<keyword id="KW-0479">Metal-binding</keyword>
<keyword id="KW-0521">NADP</keyword>
<keyword id="KW-0560">Oxidoreductase</keyword>
<proteinExistence type="inferred from homology"/>
<protein>
    <recommendedName>
        <fullName evidence="1">Ketol-acid reductoisomerase (NADP(+))</fullName>
        <shortName evidence="1">KARI</shortName>
        <ecNumber evidence="1">1.1.1.86</ecNumber>
    </recommendedName>
    <alternativeName>
        <fullName evidence="1">Acetohydroxy-acid isomeroreductase</fullName>
        <shortName evidence="1">AHIR</shortName>
    </alternativeName>
    <alternativeName>
        <fullName evidence="1">Alpha-keto-beta-hydroxylacyl reductoisomerase</fullName>
    </alternativeName>
    <alternativeName>
        <fullName evidence="1">Ketol-acid reductoisomerase type 1</fullName>
    </alternativeName>
    <alternativeName>
        <fullName evidence="1">Ketol-acid reductoisomerase type I</fullName>
    </alternativeName>
</protein>
<gene>
    <name evidence="1" type="primary">ilvC</name>
    <name type="ordered locus">RSKD131_0175</name>
</gene>
<accession>B9KM37</accession>